<accession>Q9K6Y4</accession>
<name>HPRK_HALH5</name>
<proteinExistence type="inferred from homology"/>
<keyword id="KW-0067">ATP-binding</keyword>
<keyword id="KW-0119">Carbohydrate metabolism</keyword>
<keyword id="KW-0418">Kinase</keyword>
<keyword id="KW-0460">Magnesium</keyword>
<keyword id="KW-0479">Metal-binding</keyword>
<keyword id="KW-0511">Multifunctional enzyme</keyword>
<keyword id="KW-0547">Nucleotide-binding</keyword>
<keyword id="KW-1185">Reference proteome</keyword>
<keyword id="KW-0723">Serine/threonine-protein kinase</keyword>
<keyword id="KW-0808">Transferase</keyword>
<dbReference type="EC" id="2.7.11.-"/>
<dbReference type="EC" id="2.7.4.-"/>
<dbReference type="EMBL" id="BA000004">
    <property type="protein sequence ID" value="BAB07309.1"/>
    <property type="molecule type" value="Genomic_DNA"/>
</dbReference>
<dbReference type="PIR" id="F84098">
    <property type="entry name" value="F84098"/>
</dbReference>
<dbReference type="RefSeq" id="WP_010899718.1">
    <property type="nucleotide sequence ID" value="NC_002570.2"/>
</dbReference>
<dbReference type="SMR" id="Q9K6Y4"/>
<dbReference type="STRING" id="272558.gene:10729503"/>
<dbReference type="GeneID" id="87599118"/>
<dbReference type="KEGG" id="bha:BH3590"/>
<dbReference type="eggNOG" id="COG1493">
    <property type="taxonomic scope" value="Bacteria"/>
</dbReference>
<dbReference type="HOGENOM" id="CLU_052030_0_1_9"/>
<dbReference type="OrthoDB" id="9778803at2"/>
<dbReference type="Proteomes" id="UP000001258">
    <property type="component" value="Chromosome"/>
</dbReference>
<dbReference type="GO" id="GO:0005524">
    <property type="term" value="F:ATP binding"/>
    <property type="evidence" value="ECO:0007669"/>
    <property type="project" value="UniProtKB-UniRule"/>
</dbReference>
<dbReference type="GO" id="GO:0000287">
    <property type="term" value="F:magnesium ion binding"/>
    <property type="evidence" value="ECO:0007669"/>
    <property type="project" value="UniProtKB-UniRule"/>
</dbReference>
<dbReference type="GO" id="GO:0000155">
    <property type="term" value="F:phosphorelay sensor kinase activity"/>
    <property type="evidence" value="ECO:0007669"/>
    <property type="project" value="InterPro"/>
</dbReference>
<dbReference type="GO" id="GO:0004674">
    <property type="term" value="F:protein serine/threonine kinase activity"/>
    <property type="evidence" value="ECO:0007669"/>
    <property type="project" value="UniProtKB-KW"/>
</dbReference>
<dbReference type="GO" id="GO:0004712">
    <property type="term" value="F:protein serine/threonine/tyrosine kinase activity"/>
    <property type="evidence" value="ECO:0007669"/>
    <property type="project" value="UniProtKB-UniRule"/>
</dbReference>
<dbReference type="GO" id="GO:0006109">
    <property type="term" value="P:regulation of carbohydrate metabolic process"/>
    <property type="evidence" value="ECO:0007669"/>
    <property type="project" value="UniProtKB-UniRule"/>
</dbReference>
<dbReference type="CDD" id="cd01918">
    <property type="entry name" value="HprK_C"/>
    <property type="match status" value="1"/>
</dbReference>
<dbReference type="FunFam" id="3.40.1390.20:FF:000002">
    <property type="entry name" value="HPr kinase/phosphorylase"/>
    <property type="match status" value="1"/>
</dbReference>
<dbReference type="FunFam" id="3.40.50.300:FF:000174">
    <property type="entry name" value="HPr kinase/phosphorylase"/>
    <property type="match status" value="1"/>
</dbReference>
<dbReference type="Gene3D" id="3.40.1390.20">
    <property type="entry name" value="HprK N-terminal domain-like"/>
    <property type="match status" value="1"/>
</dbReference>
<dbReference type="Gene3D" id="3.40.50.300">
    <property type="entry name" value="P-loop containing nucleotide triphosphate hydrolases"/>
    <property type="match status" value="1"/>
</dbReference>
<dbReference type="HAMAP" id="MF_01249">
    <property type="entry name" value="HPr_kinase"/>
    <property type="match status" value="1"/>
</dbReference>
<dbReference type="InterPro" id="IPR003755">
    <property type="entry name" value="HPr(Ser)_kin/Pase"/>
</dbReference>
<dbReference type="InterPro" id="IPR011104">
    <property type="entry name" value="Hpr_kin/Pase_C"/>
</dbReference>
<dbReference type="InterPro" id="IPR011126">
    <property type="entry name" value="Hpr_kin/Pase_Hpr_N"/>
</dbReference>
<dbReference type="InterPro" id="IPR027417">
    <property type="entry name" value="P-loop_NTPase"/>
</dbReference>
<dbReference type="InterPro" id="IPR028979">
    <property type="entry name" value="Ser_kin/Pase_Hpr-like_N_sf"/>
</dbReference>
<dbReference type="NCBIfam" id="TIGR00679">
    <property type="entry name" value="hpr-ser"/>
    <property type="match status" value="1"/>
</dbReference>
<dbReference type="PANTHER" id="PTHR30305:SF1">
    <property type="entry name" value="HPR KINASE_PHOSPHORYLASE"/>
    <property type="match status" value="1"/>
</dbReference>
<dbReference type="PANTHER" id="PTHR30305">
    <property type="entry name" value="PROTEIN YJDM-RELATED"/>
    <property type="match status" value="1"/>
</dbReference>
<dbReference type="Pfam" id="PF07475">
    <property type="entry name" value="Hpr_kinase_C"/>
    <property type="match status" value="1"/>
</dbReference>
<dbReference type="Pfam" id="PF02603">
    <property type="entry name" value="Hpr_kinase_N"/>
    <property type="match status" value="1"/>
</dbReference>
<dbReference type="SUPFAM" id="SSF75138">
    <property type="entry name" value="HprK N-terminal domain-like"/>
    <property type="match status" value="1"/>
</dbReference>
<dbReference type="SUPFAM" id="SSF53795">
    <property type="entry name" value="PEP carboxykinase-like"/>
    <property type="match status" value="1"/>
</dbReference>
<comment type="function">
    <text evidence="1">Catalyzes the ATP- as well as the pyrophosphate-dependent phosphorylation of a specific serine residue in HPr, a phosphocarrier protein of the phosphoenolpyruvate-dependent sugar phosphotransferase system (PTS). HprK/P also catalyzes the pyrophosphate-producing, inorganic phosphate-dependent dephosphorylation (phosphorolysis) of seryl-phosphorylated HPr (P-Ser-HPr). The two antagonistic activities of HprK/P are regulated by several intracellular metabolites, which change their concentration in response to the absence or presence of rapidly metabolisable carbon sources (glucose, fructose, etc.) in the growth medium. Also phosphorylates/dephosphorylates the HPr-like catabolite repression protein crh on a specific serine residue. Therefore, by controlling the phosphorylation state of HPr and crh, HPrK/P is a sensor enzyme that plays a major role in the regulation of carbon metabolism and sugar transport: it mediates carbon catabolite repression (CCR), and regulates PTS-catalyzed carbohydrate uptake and inducer exclusion (By similarity).</text>
</comment>
<comment type="catalytic activity">
    <reaction>
        <text>[HPr protein]-L-serine + ATP = [HPr protein]-O-phospho-L-serine + ADP + H(+)</text>
        <dbReference type="Rhea" id="RHEA:46600"/>
        <dbReference type="Rhea" id="RHEA-COMP:11602"/>
        <dbReference type="Rhea" id="RHEA-COMP:11603"/>
        <dbReference type="ChEBI" id="CHEBI:15378"/>
        <dbReference type="ChEBI" id="CHEBI:29999"/>
        <dbReference type="ChEBI" id="CHEBI:30616"/>
        <dbReference type="ChEBI" id="CHEBI:83421"/>
        <dbReference type="ChEBI" id="CHEBI:456216"/>
    </reaction>
</comment>
<comment type="catalytic activity">
    <reaction>
        <text>[HPr protein]-O-phospho-L-serine + phosphate + H(+) = [HPr protein]-L-serine + diphosphate</text>
        <dbReference type="Rhea" id="RHEA:46604"/>
        <dbReference type="Rhea" id="RHEA-COMP:11602"/>
        <dbReference type="Rhea" id="RHEA-COMP:11603"/>
        <dbReference type="ChEBI" id="CHEBI:15378"/>
        <dbReference type="ChEBI" id="CHEBI:29999"/>
        <dbReference type="ChEBI" id="CHEBI:33019"/>
        <dbReference type="ChEBI" id="CHEBI:43474"/>
        <dbReference type="ChEBI" id="CHEBI:83421"/>
    </reaction>
</comment>
<comment type="cofactor">
    <cofactor evidence="1">
        <name>Mg(2+)</name>
        <dbReference type="ChEBI" id="CHEBI:18420"/>
    </cofactor>
</comment>
<comment type="subunit">
    <text evidence="1">Homohexamer.</text>
</comment>
<comment type="domain">
    <text evidence="1">The Walker A ATP-binding motif also binds Pi and PPi.</text>
</comment>
<comment type="miscellaneous">
    <text evidence="1">Both phosphorylation and phosphorolysis are carried out by the same active site and suggest a common mechanism for both reactions.</text>
</comment>
<comment type="similarity">
    <text evidence="3">Belongs to the HPrK/P family.</text>
</comment>
<reference key="1">
    <citation type="journal article" date="2000" name="Nucleic Acids Res.">
        <title>Complete genome sequence of the alkaliphilic bacterium Bacillus halodurans and genomic sequence comparison with Bacillus subtilis.</title>
        <authorList>
            <person name="Takami H."/>
            <person name="Nakasone K."/>
            <person name="Takaki Y."/>
            <person name="Maeno G."/>
            <person name="Sasaki R."/>
            <person name="Masui N."/>
            <person name="Fuji F."/>
            <person name="Hirama C."/>
            <person name="Nakamura Y."/>
            <person name="Ogasawara N."/>
            <person name="Kuhara S."/>
            <person name="Horikoshi K."/>
        </authorList>
    </citation>
    <scope>NUCLEOTIDE SEQUENCE [LARGE SCALE GENOMIC DNA]</scope>
    <source>
        <strain>ATCC BAA-125 / DSM 18197 / FERM 7344 / JCM 9153 / C-125</strain>
    </source>
</reference>
<organism>
    <name type="scientific">Halalkalibacterium halodurans (strain ATCC BAA-125 / DSM 18197 / FERM 7344 / JCM 9153 / C-125)</name>
    <name type="common">Bacillus halodurans</name>
    <dbReference type="NCBI Taxonomy" id="272558"/>
    <lineage>
        <taxon>Bacteria</taxon>
        <taxon>Bacillati</taxon>
        <taxon>Bacillota</taxon>
        <taxon>Bacilli</taxon>
        <taxon>Bacillales</taxon>
        <taxon>Bacillaceae</taxon>
        <taxon>Halalkalibacterium (ex Joshi et al. 2022)</taxon>
    </lineage>
</organism>
<gene>
    <name type="primary">hprK</name>
    <name type="ordered locus">BH3590</name>
</gene>
<sequence length="310" mass="34584">MAKVTANDLLERFQLELLSGEEGIHRSITTSDISRPGIEMAGFFTYYPAKRLQLLGRTELSFYKQLSPVDKEERMSKLCTYDTPGIIISRGLEVPPELLKASEKVGVPVLRSNITTTRLSSMLTNFLESQLAPTTAVHGVLVDIYGIGVLITGSSGVGKSETALDLVRRGHRLVADDSVEIRREHEDTLVGRSPELIQHLLEIRGLGIINVMTLFGAGAVRPFKRIALCVNLELWDQKKVYDRLGLSEDYLRIMNVDIPKLTIPVRPGRNLAVIIEVAAMNFRLKRLGINAAQQFSDRLNDVIEEGEQEF</sequence>
<protein>
    <recommendedName>
        <fullName>HPr kinase/phosphorylase</fullName>
        <shortName>HPrK/P</shortName>
        <ecNumber>2.7.11.-</ecNumber>
        <ecNumber>2.7.4.-</ecNumber>
    </recommendedName>
    <alternativeName>
        <fullName>HPr(Ser) kinase/phosphorylase</fullName>
    </alternativeName>
</protein>
<feature type="chain" id="PRO_0000058945" description="HPr kinase/phosphorylase">
    <location>
        <begin position="1"/>
        <end position="310"/>
    </location>
</feature>
<feature type="region of interest" description="Important for the catalytic mechanism of both phosphorylation and dephosphorylation" evidence="1">
    <location>
        <begin position="201"/>
        <end position="210"/>
    </location>
</feature>
<feature type="region of interest" description="Important for the catalytic mechanism of dephosphorylation" evidence="1">
    <location>
        <begin position="264"/>
        <end position="269"/>
    </location>
</feature>
<feature type="active site" evidence="1">
    <location>
        <position position="138"/>
    </location>
</feature>
<feature type="active site" evidence="1">
    <location>
        <position position="159"/>
    </location>
</feature>
<feature type="active site" description="Proton acceptor; for phosphorylation activity. Proton donor; for dephosphorylation activity" evidence="1">
    <location>
        <position position="177"/>
    </location>
</feature>
<feature type="active site" evidence="1">
    <location>
        <position position="243"/>
    </location>
</feature>
<feature type="binding site" evidence="1">
    <location>
        <begin position="153"/>
        <end position="160"/>
    </location>
    <ligand>
        <name>ATP</name>
        <dbReference type="ChEBI" id="CHEBI:30616"/>
    </ligand>
</feature>
<feature type="binding site" evidence="2">
    <location>
        <position position="160"/>
    </location>
    <ligand>
        <name>Mg(2+)</name>
        <dbReference type="ChEBI" id="CHEBI:18420"/>
    </ligand>
</feature>
<feature type="binding site" evidence="2">
    <location>
        <position position="202"/>
    </location>
    <ligand>
        <name>Mg(2+)</name>
        <dbReference type="ChEBI" id="CHEBI:18420"/>
    </ligand>
</feature>
<evidence type="ECO:0000250" key="1"/>
<evidence type="ECO:0000255" key="2"/>
<evidence type="ECO:0000305" key="3"/>